<proteinExistence type="inferred from homology"/>
<organism>
    <name type="scientific">Staphylococcus aureus (strain MSSA476)</name>
    <dbReference type="NCBI Taxonomy" id="282459"/>
    <lineage>
        <taxon>Bacteria</taxon>
        <taxon>Bacillati</taxon>
        <taxon>Bacillota</taxon>
        <taxon>Bacilli</taxon>
        <taxon>Bacillales</taxon>
        <taxon>Staphylococcaceae</taxon>
        <taxon>Staphylococcus</taxon>
    </lineage>
</organism>
<evidence type="ECO:0000255" key="1">
    <source>
        <dbReference type="HAMAP-Rule" id="MF_01309"/>
    </source>
</evidence>
<evidence type="ECO:0000305" key="2"/>
<accession>Q6G777</accession>
<dbReference type="EMBL" id="BX571857">
    <property type="protein sequence ID" value="CAG43946.1"/>
    <property type="molecule type" value="Genomic_DNA"/>
</dbReference>
<dbReference type="RefSeq" id="WP_000529877.1">
    <property type="nucleotide sequence ID" value="NC_002953.3"/>
</dbReference>
<dbReference type="SMR" id="Q6G777"/>
<dbReference type="GeneID" id="98346556"/>
<dbReference type="KEGG" id="sas:SAS2135"/>
<dbReference type="HOGENOM" id="CLU_058591_0_2_9"/>
<dbReference type="GO" id="GO:0022627">
    <property type="term" value="C:cytosolic small ribosomal subunit"/>
    <property type="evidence" value="ECO:0007669"/>
    <property type="project" value="TreeGrafter"/>
</dbReference>
<dbReference type="GO" id="GO:0003729">
    <property type="term" value="F:mRNA binding"/>
    <property type="evidence" value="ECO:0007669"/>
    <property type="project" value="UniProtKB-UniRule"/>
</dbReference>
<dbReference type="GO" id="GO:0019843">
    <property type="term" value="F:rRNA binding"/>
    <property type="evidence" value="ECO:0007669"/>
    <property type="project" value="UniProtKB-UniRule"/>
</dbReference>
<dbReference type="GO" id="GO:0003735">
    <property type="term" value="F:structural constituent of ribosome"/>
    <property type="evidence" value="ECO:0007669"/>
    <property type="project" value="InterPro"/>
</dbReference>
<dbReference type="GO" id="GO:0006412">
    <property type="term" value="P:translation"/>
    <property type="evidence" value="ECO:0007669"/>
    <property type="project" value="UniProtKB-UniRule"/>
</dbReference>
<dbReference type="CDD" id="cd02412">
    <property type="entry name" value="KH-II_30S_S3"/>
    <property type="match status" value="1"/>
</dbReference>
<dbReference type="FunFam" id="3.30.1140.32:FF:000001">
    <property type="entry name" value="30S ribosomal protein S3"/>
    <property type="match status" value="1"/>
</dbReference>
<dbReference type="FunFam" id="3.30.300.20:FF:000001">
    <property type="entry name" value="30S ribosomal protein S3"/>
    <property type="match status" value="1"/>
</dbReference>
<dbReference type="Gene3D" id="3.30.300.20">
    <property type="match status" value="1"/>
</dbReference>
<dbReference type="Gene3D" id="3.30.1140.32">
    <property type="entry name" value="Ribosomal protein S3, C-terminal domain"/>
    <property type="match status" value="1"/>
</dbReference>
<dbReference type="HAMAP" id="MF_01309_B">
    <property type="entry name" value="Ribosomal_uS3_B"/>
    <property type="match status" value="1"/>
</dbReference>
<dbReference type="InterPro" id="IPR004087">
    <property type="entry name" value="KH_dom"/>
</dbReference>
<dbReference type="InterPro" id="IPR015946">
    <property type="entry name" value="KH_dom-like_a/b"/>
</dbReference>
<dbReference type="InterPro" id="IPR004044">
    <property type="entry name" value="KH_dom_type_2"/>
</dbReference>
<dbReference type="InterPro" id="IPR009019">
    <property type="entry name" value="KH_sf_prok-type"/>
</dbReference>
<dbReference type="InterPro" id="IPR036419">
    <property type="entry name" value="Ribosomal_S3_C_sf"/>
</dbReference>
<dbReference type="InterPro" id="IPR005704">
    <property type="entry name" value="Ribosomal_uS3_bac-typ"/>
</dbReference>
<dbReference type="InterPro" id="IPR001351">
    <property type="entry name" value="Ribosomal_uS3_C"/>
</dbReference>
<dbReference type="InterPro" id="IPR018280">
    <property type="entry name" value="Ribosomal_uS3_CS"/>
</dbReference>
<dbReference type="NCBIfam" id="TIGR01009">
    <property type="entry name" value="rpsC_bact"/>
    <property type="match status" value="1"/>
</dbReference>
<dbReference type="PANTHER" id="PTHR11760">
    <property type="entry name" value="30S/40S RIBOSOMAL PROTEIN S3"/>
    <property type="match status" value="1"/>
</dbReference>
<dbReference type="PANTHER" id="PTHR11760:SF19">
    <property type="entry name" value="SMALL RIBOSOMAL SUBUNIT PROTEIN US3C"/>
    <property type="match status" value="1"/>
</dbReference>
<dbReference type="Pfam" id="PF07650">
    <property type="entry name" value="KH_2"/>
    <property type="match status" value="1"/>
</dbReference>
<dbReference type="Pfam" id="PF00189">
    <property type="entry name" value="Ribosomal_S3_C"/>
    <property type="match status" value="1"/>
</dbReference>
<dbReference type="SMART" id="SM00322">
    <property type="entry name" value="KH"/>
    <property type="match status" value="1"/>
</dbReference>
<dbReference type="SUPFAM" id="SSF54814">
    <property type="entry name" value="Prokaryotic type KH domain (KH-domain type II)"/>
    <property type="match status" value="1"/>
</dbReference>
<dbReference type="SUPFAM" id="SSF54821">
    <property type="entry name" value="Ribosomal protein S3 C-terminal domain"/>
    <property type="match status" value="1"/>
</dbReference>
<dbReference type="PROSITE" id="PS50823">
    <property type="entry name" value="KH_TYPE_2"/>
    <property type="match status" value="1"/>
</dbReference>
<dbReference type="PROSITE" id="PS00548">
    <property type="entry name" value="RIBOSOMAL_S3"/>
    <property type="match status" value="1"/>
</dbReference>
<sequence>MGQKINPIGLRVGIIRDWEAKWYAEKDFASLLHEDLKIRKFIDNELKEASVSHVEIERAANRINIAIHTGKPGMVIGKGGSEIEKLRNKLNALTDKKVHINVIEIKKVDLDARLVAENIARQLENRASFRRVQKQAITRAMKLGAKGIKTQVSGRLGGADIARAEQYSEGTVPLHTLRADIDYAHAEADTTYGKLGVKVWIYRGEVLPTKNTSGGGK</sequence>
<name>RS3_STAAS</name>
<feature type="chain" id="PRO_0000130201" description="Small ribosomal subunit protein uS3">
    <location>
        <begin position="1"/>
        <end position="217"/>
    </location>
</feature>
<feature type="domain" description="KH type-2" evidence="1">
    <location>
        <begin position="38"/>
        <end position="106"/>
    </location>
</feature>
<protein>
    <recommendedName>
        <fullName evidence="1">Small ribosomal subunit protein uS3</fullName>
    </recommendedName>
    <alternativeName>
        <fullName evidence="2">30S ribosomal protein S3</fullName>
    </alternativeName>
</protein>
<keyword id="KW-0687">Ribonucleoprotein</keyword>
<keyword id="KW-0689">Ribosomal protein</keyword>
<keyword id="KW-0694">RNA-binding</keyword>
<keyword id="KW-0699">rRNA-binding</keyword>
<gene>
    <name evidence="1" type="primary">rpsC</name>
    <name type="ordered locus">SAS2135</name>
</gene>
<reference key="1">
    <citation type="journal article" date="2004" name="Proc. Natl. Acad. Sci. U.S.A.">
        <title>Complete genomes of two clinical Staphylococcus aureus strains: evidence for the rapid evolution of virulence and drug resistance.</title>
        <authorList>
            <person name="Holden M.T.G."/>
            <person name="Feil E.J."/>
            <person name="Lindsay J.A."/>
            <person name="Peacock S.J."/>
            <person name="Day N.P.J."/>
            <person name="Enright M.C."/>
            <person name="Foster T.J."/>
            <person name="Moore C.E."/>
            <person name="Hurst L."/>
            <person name="Atkin R."/>
            <person name="Barron A."/>
            <person name="Bason N."/>
            <person name="Bentley S.D."/>
            <person name="Chillingworth C."/>
            <person name="Chillingworth T."/>
            <person name="Churcher C."/>
            <person name="Clark L."/>
            <person name="Corton C."/>
            <person name="Cronin A."/>
            <person name="Doggett J."/>
            <person name="Dowd L."/>
            <person name="Feltwell T."/>
            <person name="Hance Z."/>
            <person name="Harris B."/>
            <person name="Hauser H."/>
            <person name="Holroyd S."/>
            <person name="Jagels K."/>
            <person name="James K.D."/>
            <person name="Lennard N."/>
            <person name="Line A."/>
            <person name="Mayes R."/>
            <person name="Moule S."/>
            <person name="Mungall K."/>
            <person name="Ormond D."/>
            <person name="Quail M.A."/>
            <person name="Rabbinowitsch E."/>
            <person name="Rutherford K.M."/>
            <person name="Sanders M."/>
            <person name="Sharp S."/>
            <person name="Simmonds M."/>
            <person name="Stevens K."/>
            <person name="Whitehead S."/>
            <person name="Barrell B.G."/>
            <person name="Spratt B.G."/>
            <person name="Parkhill J."/>
        </authorList>
    </citation>
    <scope>NUCLEOTIDE SEQUENCE [LARGE SCALE GENOMIC DNA]</scope>
    <source>
        <strain>MSSA476</strain>
    </source>
</reference>
<comment type="function">
    <text evidence="1">Binds the lower part of the 30S subunit head. Binds mRNA in the 70S ribosome, positioning it for translation.</text>
</comment>
<comment type="subunit">
    <text evidence="1">Part of the 30S ribosomal subunit. Forms a tight complex with proteins S10 and S14.</text>
</comment>
<comment type="similarity">
    <text evidence="1">Belongs to the universal ribosomal protein uS3 family.</text>
</comment>